<keyword id="KW-0963">Cytoplasm</keyword>
<keyword id="KW-0489">Methyltransferase</keyword>
<keyword id="KW-1185">Reference proteome</keyword>
<keyword id="KW-0698">rRNA processing</keyword>
<keyword id="KW-0949">S-adenosyl-L-methionine</keyword>
<keyword id="KW-0808">Transferase</keyword>
<comment type="function">
    <text evidence="1">Specifically methylates the N4 position of cytidine in position 1402 (C1402) of 16S rRNA.</text>
</comment>
<comment type="catalytic activity">
    <reaction evidence="1">
        <text>cytidine(1402) in 16S rRNA + S-adenosyl-L-methionine = N(4)-methylcytidine(1402) in 16S rRNA + S-adenosyl-L-homocysteine + H(+)</text>
        <dbReference type="Rhea" id="RHEA:42928"/>
        <dbReference type="Rhea" id="RHEA-COMP:10286"/>
        <dbReference type="Rhea" id="RHEA-COMP:10287"/>
        <dbReference type="ChEBI" id="CHEBI:15378"/>
        <dbReference type="ChEBI" id="CHEBI:57856"/>
        <dbReference type="ChEBI" id="CHEBI:59789"/>
        <dbReference type="ChEBI" id="CHEBI:74506"/>
        <dbReference type="ChEBI" id="CHEBI:82748"/>
        <dbReference type="EC" id="2.1.1.199"/>
    </reaction>
</comment>
<comment type="subcellular location">
    <subcellularLocation>
        <location evidence="1">Cytoplasm</location>
    </subcellularLocation>
</comment>
<comment type="similarity">
    <text evidence="1">Belongs to the methyltransferase superfamily. RsmH family.</text>
</comment>
<accession>A7I1J3</accession>
<protein>
    <recommendedName>
        <fullName evidence="1">Ribosomal RNA small subunit methyltransferase H</fullName>
        <ecNumber evidence="1">2.1.1.199</ecNumber>
    </recommendedName>
    <alternativeName>
        <fullName evidence="1">16S rRNA m(4)C1402 methyltransferase</fullName>
    </alternativeName>
    <alternativeName>
        <fullName evidence="1">rRNA (cytosine-N(4)-)-methyltransferase RsmH</fullName>
    </alternativeName>
</protein>
<name>RSMH_CAMHC</name>
<sequence length="310" mass="34909">MEIPHIPVLRNEVVDIFKDLQGLLIDCTLGFAGHSSAILSANENIRIFACDKDDEALDFSKKRVEIFKNRIKIFKSGFSNFLPFLETNEILNLSNVVGILADIGVSSLQIDNNDRGFSLKSDALDMRMDKNASLDAKFVVNHYSRSDLERIFYEFAELTNAKQIAAKIANYRADKEITSAKELATIIGTSNFKNRSISTATLAFQAIRIEVNKELDELNKLLDSIENSAIQNAKIAIITFHSLEDKIVKNRFKKWAQSCICPPFFERCECGNNHAIGKILTKKPITASADELKQNSRAKSAKLRVFEIKR</sequence>
<gene>
    <name evidence="1" type="primary">rsmH</name>
    <name type="synonym">mraW</name>
    <name type="ordered locus">CHAB381_0818</name>
</gene>
<reference key="1">
    <citation type="submission" date="2007-07" db="EMBL/GenBank/DDBJ databases">
        <title>Complete genome sequence of Campylobacter hominis ATCC BAA-381, a commensal isolated from the human gastrointestinal tract.</title>
        <authorList>
            <person name="Fouts D.E."/>
            <person name="Mongodin E.F."/>
            <person name="Puiu D."/>
            <person name="Sebastian Y."/>
            <person name="Miller W.G."/>
            <person name="Mandrell R.E."/>
            <person name="Nelson K.E."/>
        </authorList>
    </citation>
    <scope>NUCLEOTIDE SEQUENCE [LARGE SCALE GENOMIC DNA]</scope>
    <source>
        <strain>ATCC BAA-381 / DSM 21671 / CCUG 45161 / LMG 19568 / NCTC 13146 / CH001A</strain>
    </source>
</reference>
<dbReference type="EC" id="2.1.1.199" evidence="1"/>
<dbReference type="EMBL" id="CP000776">
    <property type="protein sequence ID" value="ABS51197.1"/>
    <property type="molecule type" value="Genomic_DNA"/>
</dbReference>
<dbReference type="RefSeq" id="WP_012108673.1">
    <property type="nucleotide sequence ID" value="NC_009714.1"/>
</dbReference>
<dbReference type="SMR" id="A7I1J3"/>
<dbReference type="STRING" id="360107.CHAB381_0818"/>
<dbReference type="KEGG" id="cha:CHAB381_0818"/>
<dbReference type="eggNOG" id="COG0275">
    <property type="taxonomic scope" value="Bacteria"/>
</dbReference>
<dbReference type="HOGENOM" id="CLU_038422_3_0_7"/>
<dbReference type="OrthoDB" id="9806637at2"/>
<dbReference type="Proteomes" id="UP000002407">
    <property type="component" value="Chromosome"/>
</dbReference>
<dbReference type="GO" id="GO:0005737">
    <property type="term" value="C:cytoplasm"/>
    <property type="evidence" value="ECO:0007669"/>
    <property type="project" value="UniProtKB-SubCell"/>
</dbReference>
<dbReference type="GO" id="GO:0071424">
    <property type="term" value="F:rRNA (cytosine-N4-)-methyltransferase activity"/>
    <property type="evidence" value="ECO:0007669"/>
    <property type="project" value="UniProtKB-UniRule"/>
</dbReference>
<dbReference type="GO" id="GO:0070475">
    <property type="term" value="P:rRNA base methylation"/>
    <property type="evidence" value="ECO:0007669"/>
    <property type="project" value="UniProtKB-UniRule"/>
</dbReference>
<dbReference type="Gene3D" id="1.10.150.170">
    <property type="entry name" value="Putative methyltransferase TM0872, insert domain"/>
    <property type="match status" value="1"/>
</dbReference>
<dbReference type="Gene3D" id="3.40.50.150">
    <property type="entry name" value="Vaccinia Virus protein VP39"/>
    <property type="match status" value="1"/>
</dbReference>
<dbReference type="HAMAP" id="MF_01007">
    <property type="entry name" value="16SrRNA_methyltr_H"/>
    <property type="match status" value="1"/>
</dbReference>
<dbReference type="InterPro" id="IPR002903">
    <property type="entry name" value="RsmH"/>
</dbReference>
<dbReference type="InterPro" id="IPR023397">
    <property type="entry name" value="SAM-dep_MeTrfase_MraW_recog"/>
</dbReference>
<dbReference type="InterPro" id="IPR029063">
    <property type="entry name" value="SAM-dependent_MTases_sf"/>
</dbReference>
<dbReference type="NCBIfam" id="TIGR00006">
    <property type="entry name" value="16S rRNA (cytosine(1402)-N(4))-methyltransferase RsmH"/>
    <property type="match status" value="1"/>
</dbReference>
<dbReference type="PANTHER" id="PTHR11265:SF0">
    <property type="entry name" value="12S RRNA N4-METHYLCYTIDINE METHYLTRANSFERASE"/>
    <property type="match status" value="1"/>
</dbReference>
<dbReference type="PANTHER" id="PTHR11265">
    <property type="entry name" value="S-ADENOSYL-METHYLTRANSFERASE MRAW"/>
    <property type="match status" value="1"/>
</dbReference>
<dbReference type="Pfam" id="PF01795">
    <property type="entry name" value="Methyltransf_5"/>
    <property type="match status" value="1"/>
</dbReference>
<dbReference type="PIRSF" id="PIRSF004486">
    <property type="entry name" value="MraW"/>
    <property type="match status" value="1"/>
</dbReference>
<dbReference type="SUPFAM" id="SSF81799">
    <property type="entry name" value="Putative methyltransferase TM0872, insert domain"/>
    <property type="match status" value="1"/>
</dbReference>
<dbReference type="SUPFAM" id="SSF53335">
    <property type="entry name" value="S-adenosyl-L-methionine-dependent methyltransferases"/>
    <property type="match status" value="1"/>
</dbReference>
<evidence type="ECO:0000255" key="1">
    <source>
        <dbReference type="HAMAP-Rule" id="MF_01007"/>
    </source>
</evidence>
<feature type="chain" id="PRO_0000318871" description="Ribosomal RNA small subunit methyltransferase H">
    <location>
        <begin position="1"/>
        <end position="310"/>
    </location>
</feature>
<feature type="binding site" evidence="1">
    <location>
        <begin position="32"/>
        <end position="34"/>
    </location>
    <ligand>
        <name>S-adenosyl-L-methionine</name>
        <dbReference type="ChEBI" id="CHEBI:59789"/>
    </ligand>
</feature>
<feature type="binding site" evidence="1">
    <location>
        <position position="51"/>
    </location>
    <ligand>
        <name>S-adenosyl-L-methionine</name>
        <dbReference type="ChEBI" id="CHEBI:59789"/>
    </ligand>
</feature>
<feature type="binding site" evidence="1">
    <location>
        <position position="84"/>
    </location>
    <ligand>
        <name>S-adenosyl-L-methionine</name>
        <dbReference type="ChEBI" id="CHEBI:59789"/>
    </ligand>
</feature>
<feature type="binding site" evidence="1">
    <location>
        <position position="102"/>
    </location>
    <ligand>
        <name>S-adenosyl-L-methionine</name>
        <dbReference type="ChEBI" id="CHEBI:59789"/>
    </ligand>
</feature>
<feature type="binding site" evidence="1">
    <location>
        <position position="109"/>
    </location>
    <ligand>
        <name>S-adenosyl-L-methionine</name>
        <dbReference type="ChEBI" id="CHEBI:59789"/>
    </ligand>
</feature>
<proteinExistence type="inferred from homology"/>
<organism>
    <name type="scientific">Campylobacter hominis (strain ATCC BAA-381 / DSM 21671 / CCUG 45161 / LMG 19568 / NCTC 13146 / CH001A)</name>
    <dbReference type="NCBI Taxonomy" id="360107"/>
    <lineage>
        <taxon>Bacteria</taxon>
        <taxon>Pseudomonadati</taxon>
        <taxon>Campylobacterota</taxon>
        <taxon>Epsilonproteobacteria</taxon>
        <taxon>Campylobacterales</taxon>
        <taxon>Campylobacteraceae</taxon>
        <taxon>Campylobacter</taxon>
    </lineage>
</organism>